<evidence type="ECO:0000255" key="1"/>
<evidence type="ECO:0000255" key="2">
    <source>
        <dbReference type="PROSITE-ProRule" id="PRU00059"/>
    </source>
</evidence>
<evidence type="ECO:0000255" key="3">
    <source>
        <dbReference type="PROSITE-ProRule" id="PRU00081"/>
    </source>
</evidence>
<evidence type="ECO:0000255" key="4">
    <source>
        <dbReference type="PROSITE-ProRule" id="PRU00128"/>
    </source>
</evidence>
<evidence type="ECO:0000256" key="5">
    <source>
        <dbReference type="SAM" id="MobiDB-lite"/>
    </source>
</evidence>
<evidence type="ECO:0000269" key="6">
    <source>
    </source>
</evidence>
<evidence type="ECO:0000269" key="7">
    <source>
    </source>
</evidence>
<evidence type="ECO:0000269" key="8">
    <source>
    </source>
</evidence>
<evidence type="ECO:0000269" key="9">
    <source>
    </source>
</evidence>
<evidence type="ECO:0000269" key="10">
    <source>
    </source>
</evidence>
<evidence type="ECO:0000269" key="11">
    <source>
    </source>
</evidence>
<evidence type="ECO:0000303" key="12">
    <source>
    </source>
</evidence>
<evidence type="ECO:0000303" key="13">
    <source>
    </source>
</evidence>
<evidence type="ECO:0000303" key="14">
    <source>
    </source>
</evidence>
<evidence type="ECO:0000305" key="15"/>
<evidence type="ECO:0007744" key="16">
    <source>
        <dbReference type="PDB" id="2QQK"/>
    </source>
</evidence>
<evidence type="ECO:0007744" key="17">
    <source>
        <dbReference type="PDB" id="2QQO"/>
    </source>
</evidence>
<evidence type="ECO:0007829" key="18">
    <source>
        <dbReference type="PDB" id="2QQJ"/>
    </source>
</evidence>
<evidence type="ECO:0007829" key="19">
    <source>
        <dbReference type="PDB" id="2QQK"/>
    </source>
</evidence>
<evidence type="ECO:0007829" key="20">
    <source>
        <dbReference type="PDB" id="2QQL"/>
    </source>
</evidence>
<evidence type="ECO:0007829" key="21">
    <source>
        <dbReference type="PDB" id="2QQO"/>
    </source>
</evidence>
<evidence type="ECO:0007829" key="22">
    <source>
        <dbReference type="PDB" id="4QDQ"/>
    </source>
</evidence>
<evidence type="ECO:0007829" key="23">
    <source>
        <dbReference type="PDB" id="4QDR"/>
    </source>
</evidence>
<evidence type="ECO:0007829" key="24">
    <source>
        <dbReference type="PDB" id="6GH8"/>
    </source>
</evidence>
<evidence type="ECO:0007829" key="25">
    <source>
        <dbReference type="PDB" id="6TJT"/>
    </source>
</evidence>
<comment type="function">
    <text>High affinity receptor for semaphorins 3C, 3F, VEGF-165 and VEGF-145 isoforms of VEGF, and the PLGF-2 isoform of PGF.</text>
</comment>
<comment type="function">
    <text evidence="10">(Microbial infection) Acts as a receptor for human cytomegalovirus pentamer-dependent entry in epithelial and endothelial cells.</text>
</comment>
<comment type="subunit">
    <text evidence="8">Heterodimer with NRP1. Binds PLXNB1.</text>
</comment>
<comment type="subunit">
    <text evidence="10">(Microbial infection) Interacts with human cytomegalovirus proteins gL, UL128, UL130 and UL131A.</text>
</comment>
<comment type="interaction">
    <interactant intactId="EBI-12586256">
        <id>O60462</id>
    </interactant>
    <interactant intactId="EBI-16148671">
        <id>P97953-1</id>
        <label>Vegfc</label>
    </interactant>
    <organismsDiffer>true</organismsDiffer>
    <experiments>3</experiments>
</comment>
<comment type="interaction">
    <interactant intactId="EBI-16148700">
        <id>O60462-6</id>
    </interactant>
    <interactant intactId="EBI-16148700">
        <id>O60462-6</id>
        <label>NRP2</label>
    </interactant>
    <organismsDiffer>false</organismsDiffer>
    <experiments>4</experiments>
</comment>
<comment type="subcellular location">
    <subcellularLocation>
        <location evidence="6">Membrane</location>
        <topology evidence="6">Single-pass type I membrane protein</topology>
    </subcellularLocation>
</comment>
<comment type="subcellular location">
    <molecule>Isoform s9</molecule>
    <subcellularLocation>
        <location evidence="6">Secreted</location>
    </subcellularLocation>
</comment>
<comment type="alternative products">
    <event type="alternative splicing"/>
    <isoform>
        <id>O60462-1</id>
        <name>A22</name>
        <sequence type="displayed"/>
    </isoform>
    <isoform>
        <id>O60462-2</id>
        <name>A0</name>
        <sequence type="described" ref="VSP_004342"/>
    </isoform>
    <isoform>
        <id>O60462-3</id>
        <name>A17</name>
        <sequence type="described" ref="VSP_004341"/>
    </isoform>
    <isoform>
        <id>O60462-4</id>
        <name>B0</name>
        <sequence type="described" ref="VSP_004341 VSP_041160"/>
    </isoform>
    <isoform>
        <id>O60462-5</id>
        <name>B5</name>
        <sequence type="described" ref="VSP_041160"/>
    </isoform>
    <isoform>
        <id>O60462-6</id>
        <name>s9</name>
        <sequence type="described" ref="VSP_044908 VSP_044909"/>
    </isoform>
</comment>
<comment type="domain">
    <text>The tandem CUB domains mediate binding to semaphorin, while the tandem F5/8 domains are responsible for heparin and VEGF binding.</text>
</comment>
<comment type="similarity">
    <text evidence="15">Belongs to the neuropilin family.</text>
</comment>
<reference key="1">
    <citation type="journal article" date="1997" name="Neuron">
        <title>Neuropilin-2, a novel member of the neuropilin family, is a high affinity receptor for the semaphorins Sema E and Sema IV but not Sema III.</title>
        <authorList>
            <person name="Chen H."/>
            <person name="Chedotal A."/>
            <person name="He Z.-G."/>
            <person name="Goodman C.S."/>
            <person name="Tessier-Lavigne M."/>
        </authorList>
    </citation>
    <scope>NUCLEOTIDE SEQUENCE [MRNA] (ISOFORMS A0 AND A17)</scope>
    <scope>VARIANT LYS-602</scope>
</reference>
<reference key="2">
    <citation type="journal article" date="1998" name="Cell">
        <title>Neuropilin-1 is expressed by endothelial and tumor cells as an isoform-specific receptor for vascular endothelial growth factor.</title>
        <authorList>
            <person name="Soker S."/>
            <person name="Takashima S."/>
            <person name="Miao H.-Q."/>
            <person name="Neufeld G."/>
            <person name="Klagsbrun M."/>
        </authorList>
    </citation>
    <scope>NUCLEOTIDE SEQUENCE [MRNA] (ISOFORM A22)</scope>
    <source>
        <tissue>Mammary gland</tissue>
    </source>
</reference>
<reference key="3">
    <citation type="journal article" date="2000" name="Genomics">
        <title>Genomic organization of human neuropilin-1 and neuropilin-2 genes: identification and distribution of splice variants and soluble isoforms.</title>
        <authorList>
            <person name="Rossignol M."/>
            <person name="Gagnon M.L."/>
            <person name="Klagsbrun M."/>
        </authorList>
    </citation>
    <scope>NUCLEOTIDE SEQUENCE [GENOMIC DNA / MRNA] (ISOFORMS B0; B5 AND S9)</scope>
    <scope>VARIANT LYS-602</scope>
    <scope>ALTERNATIVE SPLICING</scope>
    <scope>SUBCELLULAR LOCATION</scope>
</reference>
<reference key="4">
    <citation type="journal article" date="2005" name="Nature">
        <title>Generation and annotation of the DNA sequences of human chromosomes 2 and 4.</title>
        <authorList>
            <person name="Hillier L.W."/>
            <person name="Graves T.A."/>
            <person name="Fulton R.S."/>
            <person name="Fulton L.A."/>
            <person name="Pepin K.H."/>
            <person name="Minx P."/>
            <person name="Wagner-McPherson C."/>
            <person name="Layman D."/>
            <person name="Wylie K."/>
            <person name="Sekhon M."/>
            <person name="Becker M.C."/>
            <person name="Fewell G.A."/>
            <person name="Delehaunty K.D."/>
            <person name="Miner T.L."/>
            <person name="Nash W.E."/>
            <person name="Kremitzki C."/>
            <person name="Oddy L."/>
            <person name="Du H."/>
            <person name="Sun H."/>
            <person name="Bradshaw-Cordum H."/>
            <person name="Ali J."/>
            <person name="Carter J."/>
            <person name="Cordes M."/>
            <person name="Harris A."/>
            <person name="Isak A."/>
            <person name="van Brunt A."/>
            <person name="Nguyen C."/>
            <person name="Du F."/>
            <person name="Courtney L."/>
            <person name="Kalicki J."/>
            <person name="Ozersky P."/>
            <person name="Abbott S."/>
            <person name="Armstrong J."/>
            <person name="Belter E.A."/>
            <person name="Caruso L."/>
            <person name="Cedroni M."/>
            <person name="Cotton M."/>
            <person name="Davidson T."/>
            <person name="Desai A."/>
            <person name="Elliott G."/>
            <person name="Erb T."/>
            <person name="Fronick C."/>
            <person name="Gaige T."/>
            <person name="Haakenson W."/>
            <person name="Haglund K."/>
            <person name="Holmes A."/>
            <person name="Harkins R."/>
            <person name="Kim K."/>
            <person name="Kruchowski S.S."/>
            <person name="Strong C.M."/>
            <person name="Grewal N."/>
            <person name="Goyea E."/>
            <person name="Hou S."/>
            <person name="Levy A."/>
            <person name="Martinka S."/>
            <person name="Mead K."/>
            <person name="McLellan M.D."/>
            <person name="Meyer R."/>
            <person name="Randall-Maher J."/>
            <person name="Tomlinson C."/>
            <person name="Dauphin-Kohlberg S."/>
            <person name="Kozlowicz-Reilly A."/>
            <person name="Shah N."/>
            <person name="Swearengen-Shahid S."/>
            <person name="Snider J."/>
            <person name="Strong J.T."/>
            <person name="Thompson J."/>
            <person name="Yoakum M."/>
            <person name="Leonard S."/>
            <person name="Pearman C."/>
            <person name="Trani L."/>
            <person name="Radionenko M."/>
            <person name="Waligorski J.E."/>
            <person name="Wang C."/>
            <person name="Rock S.M."/>
            <person name="Tin-Wollam A.-M."/>
            <person name="Maupin R."/>
            <person name="Latreille P."/>
            <person name="Wendl M.C."/>
            <person name="Yang S.-P."/>
            <person name="Pohl C."/>
            <person name="Wallis J.W."/>
            <person name="Spieth J."/>
            <person name="Bieri T.A."/>
            <person name="Berkowicz N."/>
            <person name="Nelson J.O."/>
            <person name="Osborne J."/>
            <person name="Ding L."/>
            <person name="Meyer R."/>
            <person name="Sabo A."/>
            <person name="Shotland Y."/>
            <person name="Sinha P."/>
            <person name="Wohldmann P.E."/>
            <person name="Cook L.L."/>
            <person name="Hickenbotham M.T."/>
            <person name="Eldred J."/>
            <person name="Williams D."/>
            <person name="Jones T.A."/>
            <person name="She X."/>
            <person name="Ciccarelli F.D."/>
            <person name="Izaurralde E."/>
            <person name="Taylor J."/>
            <person name="Schmutz J."/>
            <person name="Myers R.M."/>
            <person name="Cox D.R."/>
            <person name="Huang X."/>
            <person name="McPherson J.D."/>
            <person name="Mardis E.R."/>
            <person name="Clifton S.W."/>
            <person name="Warren W.C."/>
            <person name="Chinwalla A.T."/>
            <person name="Eddy S.R."/>
            <person name="Marra M.A."/>
            <person name="Ovcharenko I."/>
            <person name="Furey T.S."/>
            <person name="Miller W."/>
            <person name="Eichler E.E."/>
            <person name="Bork P."/>
            <person name="Suyama M."/>
            <person name="Torrents D."/>
            <person name="Waterston R.H."/>
            <person name="Wilson R.K."/>
        </authorList>
    </citation>
    <scope>NUCLEOTIDE SEQUENCE [LARGE SCALE GENOMIC DNA]</scope>
    <scope>VARIANT ARG-123</scope>
</reference>
<reference key="5">
    <citation type="submission" date="2005-07" db="EMBL/GenBank/DDBJ databases">
        <authorList>
            <person name="Mural R.J."/>
            <person name="Istrail S."/>
            <person name="Sutton G.G."/>
            <person name="Florea L."/>
            <person name="Halpern A.L."/>
            <person name="Mobarry C.M."/>
            <person name="Lippert R."/>
            <person name="Walenz B."/>
            <person name="Shatkay H."/>
            <person name="Dew I."/>
            <person name="Miller J.R."/>
            <person name="Flanigan M.J."/>
            <person name="Edwards N.J."/>
            <person name="Bolanos R."/>
            <person name="Fasulo D."/>
            <person name="Halldorsson B.V."/>
            <person name="Hannenhalli S."/>
            <person name="Turner R."/>
            <person name="Yooseph S."/>
            <person name="Lu F."/>
            <person name="Nusskern D.R."/>
            <person name="Shue B.C."/>
            <person name="Zheng X.H."/>
            <person name="Zhong F."/>
            <person name="Delcher A.L."/>
            <person name="Huson D.H."/>
            <person name="Kravitz S.A."/>
            <person name="Mouchard L."/>
            <person name="Reinert K."/>
            <person name="Remington K.A."/>
            <person name="Clark A.G."/>
            <person name="Waterman M.S."/>
            <person name="Eichler E.E."/>
            <person name="Adams M.D."/>
            <person name="Hunkapiller M.W."/>
            <person name="Myers E.W."/>
            <person name="Venter J.C."/>
        </authorList>
    </citation>
    <scope>NUCLEOTIDE SEQUENCE [LARGE SCALE GENOMIC DNA]</scope>
</reference>
<reference key="6">
    <citation type="journal article" date="2004" name="Genome Res.">
        <title>The status, quality, and expansion of the NIH full-length cDNA project: the Mammalian Gene Collection (MGC).</title>
        <authorList>
            <consortium name="The MGC Project Team"/>
        </authorList>
    </citation>
    <scope>NUCLEOTIDE SEQUENCE [LARGE SCALE MRNA] (ISOFORMS B0 AND B5)</scope>
    <source>
        <tissue>Brain</tissue>
    </source>
</reference>
<reference key="7">
    <citation type="journal article" date="2000" name="J. Biol. Chem.">
        <title>Neuropilin-2 is a receptor for the vascular endothelial growth factor (VEGF) forms VEGF-145 and VEGF-165.</title>
        <authorList>
            <person name="Gluzman-Poltorak Z."/>
            <person name="Cohen T."/>
            <person name="Herzog Y."/>
            <person name="Neufeld G."/>
        </authorList>
    </citation>
    <scope>CHARACTERIZATION</scope>
</reference>
<reference key="8">
    <citation type="journal article" date="1999" name="Cell">
        <title>Plexins are a large family of receptors for transmembrane, secreted and GPI-anchored semaphorins in vertebrates.</title>
        <authorList>
            <person name="Tamagnone L."/>
            <person name="Artigiani S."/>
            <person name="Chen H."/>
            <person name="He Z."/>
            <person name="Ming G.-L."/>
            <person name="Song H.-L."/>
            <person name="Chedotal A."/>
            <person name="Winberg M.L."/>
            <person name="Goodman C.S."/>
            <person name="Poo M.-M."/>
            <person name="Tessier-Lavigne M."/>
            <person name="Comoglio P.M."/>
        </authorList>
    </citation>
    <scope>INTERACTION WITH PLXNB1</scope>
</reference>
<reference key="9">
    <citation type="journal article" date="2018" name="Cell">
        <title>An Unbiased Screen for Human Cytomegalovirus Identifies Neuropilin-2 as a Central Viral Receptor.</title>
        <authorList>
            <person name="Martinez-Martin N."/>
            <person name="Marcandalli J."/>
            <person name="Huang C.S."/>
            <person name="Arthur C.P."/>
            <person name="Perotti M."/>
            <person name="Foglierini M."/>
            <person name="Ho H."/>
            <person name="Dosey A.M."/>
            <person name="Shriver S."/>
            <person name="Payandeh J."/>
            <person name="Leitner A."/>
            <person name="Lanzavecchia A."/>
            <person name="Perez L."/>
            <person name="Ciferri C."/>
        </authorList>
    </citation>
    <scope>FUNCTION (MICROBIAL INFECTION)</scope>
    <scope>INTERACTION WITH HUMAN CYTOMEGALOVIRUS PROTEIN GL; UL128; UL130 AND UL131A (MICROBIAL INFECTION)</scope>
</reference>
<reference key="10">
    <citation type="journal article" date="2007" name="EMBO J.">
        <title>Structural studies of neuropilin/antibody complexes provide insights into semaphorin and VEGF binding.</title>
        <authorList>
            <person name="Appleton B.A."/>
            <person name="Wu P."/>
            <person name="Maloney J."/>
            <person name="Yin J."/>
            <person name="Liang W.C."/>
            <person name="Stawicki S."/>
            <person name="Mortara K."/>
            <person name="Bowman K.K."/>
            <person name="Elliott J.M."/>
            <person name="Desmarais W."/>
            <person name="Bazan J.F."/>
            <person name="Bagri A."/>
            <person name="Tessier-Lavigne M."/>
            <person name="Koch A.W."/>
            <person name="Wu Y."/>
            <person name="Watts R.J."/>
            <person name="Wiesmann C."/>
        </authorList>
    </citation>
    <scope>X-RAY CRYSTALLOGRAPHY (2.75 ANGSTROMS) OF 23-595 ALONE AND IN COMPLEX WITH ANTIBODY</scope>
    <scope>SUBUNIT</scope>
    <scope>CALCIUM-BINDING SITES</scope>
    <scope>DISULFIDE BONDS</scope>
    <scope>GLYCOSYLATION AT ASN-152 AND ASN-157</scope>
</reference>
<reference key="11">
    <citation type="journal article" date="2012" name="Am. J. Hum. Genet.">
        <title>de novo pathogenic SCN8A mutation identified by whole-genome sequencing of a family quartet affected by infantile epileptic encephalopathy and SUDEP.</title>
        <authorList>
            <person name="Veeramah K.R."/>
            <person name="O'Brien J.E."/>
            <person name="Meisler M.H."/>
            <person name="Cheng X."/>
            <person name="Dib-Hajj S.D."/>
            <person name="Waxman S.G."/>
            <person name="Talwar D."/>
            <person name="Girirajan S."/>
            <person name="Eichler E.E."/>
            <person name="Restifo L.L."/>
            <person name="Erickson R.P."/>
            <person name="Hammer M.F."/>
        </authorList>
    </citation>
    <scope>VARIANTS CYS-334 AND TRP-428</scope>
</reference>
<proteinExistence type="evidence at protein level"/>
<protein>
    <recommendedName>
        <fullName>Neuropilin-2</fullName>
    </recommendedName>
    <alternativeName>
        <fullName>Vascular endothelial cell growth factor 165 receptor 2</fullName>
    </alternativeName>
</protein>
<gene>
    <name type="primary">NRP2</name>
    <name type="synonym">VEGF165R2</name>
</gene>
<feature type="signal peptide" description="Or 22" evidence="1">
    <location>
        <begin position="1"/>
        <end position="20"/>
    </location>
</feature>
<feature type="chain" id="PRO_0000021863" description="Neuropilin-2">
    <location>
        <begin position="21"/>
        <end position="931"/>
    </location>
</feature>
<feature type="topological domain" description="Extracellular" evidence="1">
    <location>
        <begin position="21"/>
        <end position="864"/>
    </location>
</feature>
<feature type="transmembrane region" description="Helical" evidence="1">
    <location>
        <begin position="865"/>
        <end position="889"/>
    </location>
</feature>
<feature type="topological domain" description="Cytoplasmic" evidence="1">
    <location>
        <begin position="890"/>
        <end position="931"/>
    </location>
</feature>
<feature type="domain" description="CUB 1" evidence="2">
    <location>
        <begin position="28"/>
        <end position="142"/>
    </location>
</feature>
<feature type="domain" description="CUB 2" evidence="2">
    <location>
        <begin position="149"/>
        <end position="267"/>
    </location>
</feature>
<feature type="domain" description="F5/8 type C 1" evidence="3">
    <location>
        <begin position="277"/>
        <end position="427"/>
    </location>
</feature>
<feature type="domain" description="F5/8 type C 2" evidence="3">
    <location>
        <begin position="434"/>
        <end position="592"/>
    </location>
</feature>
<feature type="domain" description="MAM" evidence="4">
    <location>
        <begin position="642"/>
        <end position="802"/>
    </location>
</feature>
<feature type="region of interest" description="Disordered" evidence="5">
    <location>
        <begin position="298"/>
        <end position="317"/>
    </location>
</feature>
<feature type="region of interest" description="Disordered" evidence="5">
    <location>
        <begin position="601"/>
        <end position="622"/>
    </location>
</feature>
<feature type="compositionally biased region" description="Polar residues" evidence="5">
    <location>
        <begin position="298"/>
        <end position="310"/>
    </location>
</feature>
<feature type="binding site" evidence="8 17">
    <location>
        <position position="197"/>
    </location>
    <ligand>
        <name>Ca(2+)</name>
        <dbReference type="ChEBI" id="CHEBI:29108"/>
    </ligand>
</feature>
<feature type="binding site" evidence="8 17">
    <location>
        <position position="211"/>
    </location>
    <ligand>
        <name>Ca(2+)</name>
        <dbReference type="ChEBI" id="CHEBI:29108"/>
    </ligand>
</feature>
<feature type="binding site" evidence="8 17">
    <location>
        <position position="252"/>
    </location>
    <ligand>
        <name>Ca(2+)</name>
        <dbReference type="ChEBI" id="CHEBI:29108"/>
    </ligand>
</feature>
<feature type="glycosylation site" description="N-linked (GlcNAc...) asparagine" evidence="8 16">
    <location>
        <position position="152"/>
    </location>
</feature>
<feature type="glycosylation site" description="N-linked (GlcNAc...) asparagine" evidence="8 16">
    <location>
        <position position="157"/>
    </location>
</feature>
<feature type="glycosylation site" description="N-linked (GlcNAc...) asparagine" evidence="1">
    <location>
        <position position="629"/>
    </location>
</feature>
<feature type="glycosylation site" description="N-linked (GlcNAc...) asparagine" evidence="1">
    <location>
        <position position="839"/>
    </location>
</feature>
<feature type="disulfide bond" evidence="8">
    <location>
        <begin position="28"/>
        <end position="55"/>
    </location>
</feature>
<feature type="disulfide bond" evidence="8">
    <location>
        <begin position="83"/>
        <end position="105"/>
    </location>
</feature>
<feature type="disulfide bond" evidence="8">
    <location>
        <begin position="149"/>
        <end position="175"/>
    </location>
</feature>
<feature type="disulfide bond" evidence="8">
    <location>
        <begin position="208"/>
        <end position="230"/>
    </location>
</feature>
<feature type="disulfide bond" evidence="8">
    <location>
        <begin position="277"/>
        <end position="427"/>
    </location>
</feature>
<feature type="disulfide bond" evidence="8">
    <location>
        <begin position="434"/>
        <end position="592"/>
    </location>
</feature>
<feature type="splice variant" id="VSP_044908" description="In isoform s9." evidence="12">
    <original>LFEGNMHY</original>
    <variation>VGCSWRPL</variation>
    <location>
        <begin position="548"/>
        <end position="555"/>
    </location>
</feature>
<feature type="splice variant" id="VSP_044909" description="In isoform s9." evidence="12">
    <location>
        <begin position="556"/>
        <end position="931"/>
    </location>
</feature>
<feature type="splice variant" id="VSP_004342" description="In isoform A0." evidence="14">
    <location>
        <begin position="809"/>
        <end position="830"/>
    </location>
</feature>
<feature type="splice variant" id="VSP_004341" description="In isoform A17 and isoform B0." evidence="12 13 14">
    <location>
        <begin position="809"/>
        <end position="813"/>
    </location>
</feature>
<feature type="splice variant" id="VSP_041160" description="In isoform B0 and isoform B5." evidence="12 13">
    <original>VDIPEIHEREGYEDEIDDEYEVDWSNSSSATSGSGAPSTDKEKSWLYTLDPILITIIAMSSLGVLLGATCAGLLLYCTCSYSGLSSRSCTTLENYNFELYDGLKHKVKMNHQKCCSEA</original>
    <variation>GGTLLPGTEPTVDTVPMQPIPAYWYYVMAAGGAVLVLVSVALALVLHYHRFRYAAKKTDHSITYKTSHYTNGAPLAVEPTLTIKLEQDRGSHC</variation>
    <location>
        <begin position="814"/>
        <end position="931"/>
    </location>
</feature>
<feature type="sequence variant" id="VAR_047754" description="In dbSNP:rs849541." evidence="7">
    <original>K</original>
    <variation>R</variation>
    <location>
        <position position="123"/>
    </location>
</feature>
<feature type="sequence variant" id="VAR_067537" description="Rare variant; may act as a phenotype modifier in EIEE13 patients carrying SCN8A mutations; dbSNP:rs114144673." evidence="9">
    <original>R</original>
    <variation>C</variation>
    <location>
        <position position="334"/>
    </location>
</feature>
<feature type="sequence variant" id="VAR_067538" description="Rare variant; may act as a phenotype modifier in EIEE13 patients carrying SCN8A mutations; dbSNP:rs139711818." evidence="9">
    <original>R</original>
    <variation>W</variation>
    <location>
        <position position="428"/>
    </location>
</feature>
<feature type="sequence variant" id="VAR_065167" description="In dbSNP:rs1128169." evidence="6 11">
    <original>E</original>
    <variation>K</variation>
    <location>
        <position position="602"/>
    </location>
</feature>
<feature type="strand" evidence="24">
    <location>
        <begin position="30"/>
        <end position="33"/>
    </location>
</feature>
<feature type="strand" evidence="24">
    <location>
        <begin position="38"/>
        <end position="41"/>
    </location>
</feature>
<feature type="turn" evidence="24">
    <location>
        <begin position="43"/>
        <end position="46"/>
    </location>
</feature>
<feature type="strand" evidence="24">
    <location>
        <begin position="54"/>
        <end position="60"/>
    </location>
</feature>
<feature type="strand" evidence="24">
    <location>
        <begin position="68"/>
        <end position="72"/>
    </location>
</feature>
<feature type="strand" evidence="24">
    <location>
        <begin position="84"/>
        <end position="95"/>
    </location>
</feature>
<feature type="strand" evidence="24">
    <location>
        <begin position="98"/>
        <end position="104"/>
    </location>
</feature>
<feature type="strand" evidence="24">
    <location>
        <begin position="106"/>
        <end position="108"/>
    </location>
</feature>
<feature type="strand" evidence="24">
    <location>
        <begin position="116"/>
        <end position="125"/>
    </location>
</feature>
<feature type="strand" evidence="24">
    <location>
        <begin position="136"/>
        <end position="141"/>
    </location>
</feature>
<feature type="strand" evidence="21">
    <location>
        <begin position="151"/>
        <end position="153"/>
    </location>
</feature>
<feature type="strand" evidence="21">
    <location>
        <begin position="155"/>
        <end position="161"/>
    </location>
</feature>
<feature type="turn" evidence="21">
    <location>
        <begin position="163"/>
        <end position="166"/>
    </location>
</feature>
<feature type="strand" evidence="21">
    <location>
        <begin position="174"/>
        <end position="180"/>
    </location>
</feature>
<feature type="strand" evidence="21">
    <location>
        <begin position="186"/>
        <end position="195"/>
    </location>
</feature>
<feature type="strand" evidence="21">
    <location>
        <begin position="210"/>
        <end position="219"/>
    </location>
</feature>
<feature type="turn" evidence="21">
    <location>
        <begin position="220"/>
        <end position="222"/>
    </location>
</feature>
<feature type="strand" evidence="21">
    <location>
        <begin position="225"/>
        <end position="229"/>
    </location>
</feature>
<feature type="strand" evidence="19">
    <location>
        <begin position="231"/>
        <end position="233"/>
    </location>
</feature>
<feature type="strand" evidence="21">
    <location>
        <begin position="238"/>
        <end position="240"/>
    </location>
</feature>
<feature type="strand" evidence="21">
    <location>
        <begin position="242"/>
        <end position="250"/>
    </location>
</feature>
<feature type="strand" evidence="20">
    <location>
        <begin position="255"/>
        <end position="257"/>
    </location>
</feature>
<feature type="strand" evidence="21">
    <location>
        <begin position="259"/>
        <end position="267"/>
    </location>
</feature>
<feature type="turn" evidence="25">
    <location>
        <begin position="283"/>
        <end position="285"/>
    </location>
</feature>
<feature type="strand" evidence="23">
    <location>
        <begin position="286"/>
        <end position="288"/>
    </location>
</feature>
<feature type="helix" evidence="25">
    <location>
        <begin position="290"/>
        <end position="292"/>
    </location>
</feature>
<feature type="strand" evidence="25">
    <location>
        <begin position="293"/>
        <end position="296"/>
    </location>
</feature>
<feature type="strand" evidence="25">
    <location>
        <begin position="302"/>
        <end position="304"/>
    </location>
</feature>
<feature type="helix" evidence="25">
    <location>
        <begin position="306"/>
        <end position="308"/>
    </location>
</feature>
<feature type="strand" evidence="20">
    <location>
        <begin position="324"/>
        <end position="326"/>
    </location>
</feature>
<feature type="strand" evidence="25">
    <location>
        <begin position="329"/>
        <end position="345"/>
    </location>
</feature>
<feature type="turn" evidence="25">
    <location>
        <begin position="350"/>
        <end position="352"/>
    </location>
</feature>
<feature type="strand" evidence="25">
    <location>
        <begin position="355"/>
        <end position="371"/>
    </location>
</feature>
<feature type="strand" evidence="25">
    <location>
        <begin position="373"/>
        <end position="375"/>
    </location>
</feature>
<feature type="strand" evidence="25">
    <location>
        <begin position="377"/>
        <end position="380"/>
    </location>
</feature>
<feature type="strand" evidence="25">
    <location>
        <begin position="382"/>
        <end position="385"/>
    </location>
</feature>
<feature type="strand" evidence="25">
    <location>
        <begin position="388"/>
        <end position="391"/>
    </location>
</feature>
<feature type="strand" evidence="25">
    <location>
        <begin position="394"/>
        <end position="417"/>
    </location>
</feature>
<feature type="strand" evidence="25">
    <location>
        <begin position="420"/>
        <end position="428"/>
    </location>
</feature>
<feature type="helix" evidence="18">
    <location>
        <begin position="429"/>
        <end position="431"/>
    </location>
</feature>
<feature type="strand" evidence="22">
    <location>
        <begin position="432"/>
        <end position="434"/>
    </location>
</feature>
<feature type="turn" evidence="18">
    <location>
        <begin position="440"/>
        <end position="442"/>
    </location>
</feature>
<feature type="strand" evidence="19">
    <location>
        <begin position="443"/>
        <end position="445"/>
    </location>
</feature>
<feature type="helix" evidence="18">
    <location>
        <begin position="447"/>
        <end position="449"/>
    </location>
</feature>
<feature type="strand" evidence="18">
    <location>
        <begin position="450"/>
        <end position="453"/>
    </location>
</feature>
<feature type="strand" evidence="22">
    <location>
        <begin position="456"/>
        <end position="459"/>
    </location>
</feature>
<feature type="helix" evidence="18">
    <location>
        <begin position="462"/>
        <end position="465"/>
    </location>
</feature>
<feature type="turn" evidence="18">
    <location>
        <begin position="467"/>
        <end position="469"/>
    </location>
</feature>
<feature type="strand" evidence="20">
    <location>
        <begin position="470"/>
        <end position="472"/>
    </location>
</feature>
<feature type="strand" evidence="18">
    <location>
        <begin position="477"/>
        <end position="480"/>
    </location>
</feature>
<feature type="turn" evidence="18">
    <location>
        <begin position="483"/>
        <end position="485"/>
    </location>
</feature>
<feature type="strand" evidence="18">
    <location>
        <begin position="488"/>
        <end position="504"/>
    </location>
</feature>
<feature type="helix" evidence="21">
    <location>
        <begin position="515"/>
        <end position="517"/>
    </location>
</feature>
<feature type="strand" evidence="18">
    <location>
        <begin position="521"/>
        <end position="534"/>
    </location>
</feature>
<feature type="turn" evidence="18">
    <location>
        <begin position="541"/>
        <end position="544"/>
    </location>
</feature>
<feature type="strand" evidence="18">
    <location>
        <begin position="553"/>
        <end position="557"/>
    </location>
</feature>
<feature type="strand" evidence="18">
    <location>
        <begin position="559"/>
        <end position="578"/>
    </location>
</feature>
<feature type="strand" evidence="18">
    <location>
        <begin position="585"/>
        <end position="593"/>
    </location>
</feature>
<organism>
    <name type="scientific">Homo sapiens</name>
    <name type="common">Human</name>
    <dbReference type="NCBI Taxonomy" id="9606"/>
    <lineage>
        <taxon>Eukaryota</taxon>
        <taxon>Metazoa</taxon>
        <taxon>Chordata</taxon>
        <taxon>Craniata</taxon>
        <taxon>Vertebrata</taxon>
        <taxon>Euteleostomi</taxon>
        <taxon>Mammalia</taxon>
        <taxon>Eutheria</taxon>
        <taxon>Euarchontoglires</taxon>
        <taxon>Primates</taxon>
        <taxon>Haplorrhini</taxon>
        <taxon>Catarrhini</taxon>
        <taxon>Hominidae</taxon>
        <taxon>Homo</taxon>
    </lineage>
</organism>
<sequence>MDMFPLTWVFLALYFSRHQVRGQPDPPCGGRLNSKDAGYITSPGYPQDYPSHQNCEWIVYAPEPNQKIVLNFNPHFEIEKHDCKYDFIEIRDGDSESADLLGKHCGNIAPPTIISSGSMLYIKFTSDYARQGAGFSLRYEIFKTGSEDCSKNFTSPNGTIESPGFPEKYPHNLDCTFTILAKPKMEIILQFLIFDLEHDPLQVGEGDCKYDWLDIWDGIPHVGPLIGKYCGTKTPSELRSSTGILSLTFHTDMAVAKDGFSARYYLVHQEPLENFQCNVPLGMESGRIANEQISASSTYSDGRWTPQQSRLHGDDNGWTPNLDSNKEYLQVDLRFLTMLTAIATQGAISRETQNGYYVKSYKLEVSTNGEDWMVYRHGKNHKVFQANNDATEVVLNKLHAPLLTRFVRIRPQTWHSGIALRLELFGCRVTDAPCSNMLGMLSGLIADSQISASSTQEYLWSPSAARLVSSRSGWFPRIPQAQPGEEWLQVDLGTPKTVKGVIIQGARGGDSITAVEARAFVRKFKVSYSLNGKDWEYIQDPRTQQPKLFEGNMHYDTPDIRRFDPIPAQYVRVYPERWSPAGIGMRLEVLGCDWTDSKPTVETLGPTVKSEETTTPYPTEEEATECGENCSFEDDKDLQLPSGFNCNFDFLEEPCGWMYDHAKWLRTTWASSSSPNDRTFPDDRNFLRLQSDSQREGQYARLISPPVHLPRSPVCMEFQYQATGGRGVALQVVREASQESKLLWVIREDQGGEWKHGRIILPSYDMEYQIVFEGVIGKGRSGEIAIDDIRISTDVPLENCMEPISAFAGENFKVDIPEIHEREGYEDEIDDEYEVDWSNSSSATSGSGAPSTDKEKSWLYTLDPILITIIAMSSLGVLLGATCAGLLLYCTCSYSGLSSRSCTTLENYNFELYDGLKHKVKMNHQKCCSEA</sequence>
<dbReference type="EMBL" id="AF022859">
    <property type="protein sequence ID" value="AAC51788.1"/>
    <property type="molecule type" value="mRNA"/>
</dbReference>
<dbReference type="EMBL" id="AF022860">
    <property type="protein sequence ID" value="AAC51789.1"/>
    <property type="molecule type" value="mRNA"/>
</dbReference>
<dbReference type="EMBL" id="AF016098">
    <property type="protein sequence ID" value="AAC12922.1"/>
    <property type="molecule type" value="mRNA"/>
</dbReference>
<dbReference type="EMBL" id="AF280544">
    <property type="protein sequence ID" value="AAG41403.1"/>
    <property type="molecule type" value="mRNA"/>
</dbReference>
<dbReference type="EMBL" id="AF280545">
    <property type="protein sequence ID" value="AAG41404.1"/>
    <property type="molecule type" value="mRNA"/>
</dbReference>
<dbReference type="EMBL" id="AF280546">
    <property type="protein sequence ID" value="AAG41405.1"/>
    <property type="molecule type" value="mRNA"/>
</dbReference>
<dbReference type="EMBL" id="KJ534899">
    <property type="protein sequence ID" value="AHW56539.1"/>
    <property type="molecule type" value="mRNA"/>
</dbReference>
<dbReference type="EMBL" id="AF281074">
    <property type="protein sequence ID" value="AAG41897.1"/>
    <property type="molecule type" value="Genomic_DNA"/>
</dbReference>
<dbReference type="EMBL" id="AF281074">
    <property type="protein sequence ID" value="AAG41898.1"/>
    <property type="molecule type" value="Genomic_DNA"/>
</dbReference>
<dbReference type="EMBL" id="AF281074">
    <property type="protein sequence ID" value="AAG41899.1"/>
    <property type="molecule type" value="Genomic_DNA"/>
</dbReference>
<dbReference type="EMBL" id="AF281074">
    <property type="protein sequence ID" value="AAG41900.1"/>
    <property type="molecule type" value="Genomic_DNA"/>
</dbReference>
<dbReference type="EMBL" id="AC007362">
    <property type="protein sequence ID" value="AAX93216.1"/>
    <property type="molecule type" value="Genomic_DNA"/>
</dbReference>
<dbReference type="EMBL" id="AC007561">
    <property type="protein sequence ID" value="AAY14875.1"/>
    <property type="molecule type" value="Genomic_DNA"/>
</dbReference>
<dbReference type="EMBL" id="KF459587">
    <property type="status" value="NOT_ANNOTATED_CDS"/>
    <property type="molecule type" value="Genomic_DNA"/>
</dbReference>
<dbReference type="EMBL" id="CH471063">
    <property type="protein sequence ID" value="EAW70362.1"/>
    <property type="molecule type" value="Genomic_DNA"/>
</dbReference>
<dbReference type="EMBL" id="CH471063">
    <property type="protein sequence ID" value="EAW70363.1"/>
    <property type="molecule type" value="Genomic_DNA"/>
</dbReference>
<dbReference type="EMBL" id="CH471063">
    <property type="protein sequence ID" value="EAW70364.1"/>
    <property type="molecule type" value="Genomic_DNA"/>
</dbReference>
<dbReference type="EMBL" id="CH471063">
    <property type="protein sequence ID" value="EAW70366.1"/>
    <property type="molecule type" value="Genomic_DNA"/>
</dbReference>
<dbReference type="EMBL" id="CH471063">
    <property type="protein sequence ID" value="EAW70368.1"/>
    <property type="molecule type" value="Genomic_DNA"/>
</dbReference>
<dbReference type="EMBL" id="CH471063">
    <property type="protein sequence ID" value="EAW70369.1"/>
    <property type="molecule type" value="Genomic_DNA"/>
</dbReference>
<dbReference type="EMBL" id="CH471063">
    <property type="protein sequence ID" value="EAW70371.1"/>
    <property type="molecule type" value="Genomic_DNA"/>
</dbReference>
<dbReference type="EMBL" id="CH471063">
    <property type="protein sequence ID" value="EAW70372.1"/>
    <property type="molecule type" value="Genomic_DNA"/>
</dbReference>
<dbReference type="EMBL" id="CH471063">
    <property type="protein sequence ID" value="EAW70373.1"/>
    <property type="molecule type" value="Genomic_DNA"/>
</dbReference>
<dbReference type="EMBL" id="BC101525">
    <property type="protein sequence ID" value="AAI01526.1"/>
    <property type="molecule type" value="mRNA"/>
</dbReference>
<dbReference type="EMBL" id="BC104770">
    <property type="protein sequence ID" value="AAI04771.1"/>
    <property type="molecule type" value="mRNA"/>
</dbReference>
<dbReference type="EMBL" id="BC143238">
    <property type="protein sequence ID" value="AAI43239.1"/>
    <property type="molecule type" value="mRNA"/>
</dbReference>
<dbReference type="EMBL" id="BC117413">
    <property type="protein sequence ID" value="AAI17414.1"/>
    <property type="molecule type" value="mRNA"/>
</dbReference>
<dbReference type="CCDS" id="CCDS2364.1">
    <molecule id="O60462-1"/>
</dbReference>
<dbReference type="CCDS" id="CCDS2365.1">
    <molecule id="O60462-5"/>
</dbReference>
<dbReference type="CCDS" id="CCDS46496.1">
    <molecule id="O60462-3"/>
</dbReference>
<dbReference type="CCDS" id="CCDS46497.1">
    <molecule id="O60462-2"/>
</dbReference>
<dbReference type="CCDS" id="CCDS46498.1">
    <molecule id="O60462-4"/>
</dbReference>
<dbReference type="CCDS" id="CCDS46499.1">
    <molecule id="O60462-6"/>
</dbReference>
<dbReference type="RefSeq" id="NP_003863.2">
    <molecule id="O60462-3"/>
    <property type="nucleotide sequence ID" value="NM_003872.2"/>
</dbReference>
<dbReference type="RefSeq" id="NP_061004.3">
    <molecule id="O60462-5"/>
    <property type="nucleotide sequence ID" value="NM_018534.3"/>
</dbReference>
<dbReference type="RefSeq" id="NP_957716.1">
    <molecule id="O60462-6"/>
    <property type="nucleotide sequence ID" value="NM_201264.2"/>
</dbReference>
<dbReference type="RefSeq" id="NP_957718.1">
    <molecule id="O60462-1"/>
    <property type="nucleotide sequence ID" value="NM_201266.2"/>
</dbReference>
<dbReference type="RefSeq" id="NP_957719.1">
    <molecule id="O60462-4"/>
    <property type="nucleotide sequence ID" value="NM_201267.2"/>
</dbReference>
<dbReference type="RefSeq" id="NP_958436.1">
    <molecule id="O60462-2"/>
    <property type="nucleotide sequence ID" value="NM_201279.2"/>
</dbReference>
<dbReference type="RefSeq" id="XP_005246990.2">
    <property type="nucleotide sequence ID" value="XM_005246933.3"/>
</dbReference>
<dbReference type="RefSeq" id="XP_005246991.2">
    <property type="nucleotide sequence ID" value="XM_005246934.3"/>
</dbReference>
<dbReference type="RefSeq" id="XP_016860674.1">
    <property type="nucleotide sequence ID" value="XM_017005185.1"/>
</dbReference>
<dbReference type="RefSeq" id="XP_016860675.1">
    <property type="nucleotide sequence ID" value="XM_017005186.1"/>
</dbReference>
<dbReference type="RefSeq" id="XP_047302126.1">
    <molecule id="O60462-1"/>
    <property type="nucleotide sequence ID" value="XM_047446170.1"/>
</dbReference>
<dbReference type="RefSeq" id="XP_047302127.1">
    <molecule id="O60462-1"/>
    <property type="nucleotide sequence ID" value="XM_047446171.1"/>
</dbReference>
<dbReference type="RefSeq" id="XP_047302128.1">
    <molecule id="O60462-3"/>
    <property type="nucleotide sequence ID" value="XM_047446172.1"/>
</dbReference>
<dbReference type="RefSeq" id="XP_047302129.1">
    <molecule id="O60462-3"/>
    <property type="nucleotide sequence ID" value="XM_047446173.1"/>
</dbReference>
<dbReference type="RefSeq" id="XP_047302130.1">
    <molecule id="O60462-5"/>
    <property type="nucleotide sequence ID" value="XM_047446174.1"/>
</dbReference>
<dbReference type="RefSeq" id="XP_047302131.1">
    <molecule id="O60462-4"/>
    <property type="nucleotide sequence ID" value="XM_047446175.1"/>
</dbReference>
<dbReference type="RefSeq" id="XP_047302132.1">
    <molecule id="O60462-4"/>
    <property type="nucleotide sequence ID" value="XM_047446176.1"/>
</dbReference>
<dbReference type="RefSeq" id="XP_054200338.1">
    <molecule id="O60462-1"/>
    <property type="nucleotide sequence ID" value="XM_054344363.1"/>
</dbReference>
<dbReference type="RefSeq" id="XP_054200339.1">
    <molecule id="O60462-1"/>
    <property type="nucleotide sequence ID" value="XM_054344364.1"/>
</dbReference>
<dbReference type="RefSeq" id="XP_054200340.1">
    <molecule id="O60462-3"/>
    <property type="nucleotide sequence ID" value="XM_054344365.1"/>
</dbReference>
<dbReference type="RefSeq" id="XP_054200341.1">
    <molecule id="O60462-3"/>
    <property type="nucleotide sequence ID" value="XM_054344366.1"/>
</dbReference>
<dbReference type="RefSeq" id="XP_054200342.1">
    <molecule id="O60462-5"/>
    <property type="nucleotide sequence ID" value="XM_054344367.1"/>
</dbReference>
<dbReference type="RefSeq" id="XP_054200343.1">
    <molecule id="O60462-4"/>
    <property type="nucleotide sequence ID" value="XM_054344368.1"/>
</dbReference>
<dbReference type="RefSeq" id="XP_054200344.1">
    <molecule id="O60462-4"/>
    <property type="nucleotide sequence ID" value="XM_054344369.1"/>
</dbReference>
<dbReference type="PDB" id="2QQJ">
    <property type="method" value="X-ray"/>
    <property type="resolution" value="1.95 A"/>
    <property type="chains" value="A=275-595"/>
</dbReference>
<dbReference type="PDB" id="2QQK">
    <property type="method" value="X-ray"/>
    <property type="resolution" value="2.75 A"/>
    <property type="chains" value="A=23-595"/>
</dbReference>
<dbReference type="PDB" id="2QQL">
    <property type="method" value="X-ray"/>
    <property type="resolution" value="3.10 A"/>
    <property type="chains" value="A=23-595"/>
</dbReference>
<dbReference type="PDB" id="2QQO">
    <property type="method" value="X-ray"/>
    <property type="resolution" value="2.30 A"/>
    <property type="chains" value="A/B=145-595"/>
</dbReference>
<dbReference type="PDB" id="4QDQ">
    <property type="method" value="X-ray"/>
    <property type="resolution" value="1.95 A"/>
    <property type="chains" value="A/B=276-595"/>
</dbReference>
<dbReference type="PDB" id="4QDR">
    <property type="method" value="X-ray"/>
    <property type="resolution" value="2.40 A"/>
    <property type="chains" value="A=276-595"/>
</dbReference>
<dbReference type="PDB" id="4QDS">
    <property type="method" value="X-ray"/>
    <property type="resolution" value="2.40 A"/>
    <property type="chains" value="A/B=275-457"/>
</dbReference>
<dbReference type="PDB" id="5DN2">
    <property type="method" value="X-ray"/>
    <property type="resolution" value="1.95 A"/>
    <property type="chains" value="A/B/C/D=275-429"/>
</dbReference>
<dbReference type="PDB" id="5DQ0">
    <property type="method" value="X-ray"/>
    <property type="resolution" value="1.80 A"/>
    <property type="chains" value="A=275-430"/>
</dbReference>
<dbReference type="PDB" id="6GH8">
    <property type="method" value="X-ray"/>
    <property type="resolution" value="2.44 A"/>
    <property type="chains" value="A/C=27-146"/>
</dbReference>
<dbReference type="PDB" id="6TDB">
    <property type="method" value="X-ray"/>
    <property type="resolution" value="2.45 A"/>
    <property type="chains" value="A/B/C/D=275-430"/>
</dbReference>
<dbReference type="PDB" id="6TJT">
    <property type="method" value="X-ray"/>
    <property type="resolution" value="1.31 A"/>
    <property type="chains" value="A/B=275-430"/>
</dbReference>
<dbReference type="PDB" id="7M22">
    <property type="method" value="EM"/>
    <property type="resolution" value="3.65 A"/>
    <property type="chains" value="N=23-595"/>
</dbReference>
<dbReference type="PDB" id="7T4S">
    <property type="method" value="EM"/>
    <property type="resolution" value="3.10 A"/>
    <property type="chains" value="F=1-864"/>
</dbReference>
<dbReference type="PDB" id="8IVW">
    <property type="method" value="X-ray"/>
    <property type="resolution" value="3.21 A"/>
    <property type="chains" value="A/D/G/J=25-595"/>
</dbReference>
<dbReference type="PDB" id="8IVX">
    <property type="method" value="X-ray"/>
    <property type="resolution" value="1.90 A"/>
    <property type="chains" value="A=25-595"/>
</dbReference>
<dbReference type="PDBsum" id="2QQJ"/>
<dbReference type="PDBsum" id="2QQK"/>
<dbReference type="PDBsum" id="2QQL"/>
<dbReference type="PDBsum" id="2QQO"/>
<dbReference type="PDBsum" id="4QDQ"/>
<dbReference type="PDBsum" id="4QDR"/>
<dbReference type="PDBsum" id="4QDS"/>
<dbReference type="PDBsum" id="5DN2"/>
<dbReference type="PDBsum" id="5DQ0"/>
<dbReference type="PDBsum" id="6GH8"/>
<dbReference type="PDBsum" id="6TDB"/>
<dbReference type="PDBsum" id="6TJT"/>
<dbReference type="PDBsum" id="7M22"/>
<dbReference type="PDBsum" id="7T4S"/>
<dbReference type="PDBsum" id="8IVW"/>
<dbReference type="PDBsum" id="8IVX"/>
<dbReference type="EMDB" id="EMD-23629"/>
<dbReference type="EMDB" id="EMD-25687"/>
<dbReference type="EMDB" id="EMD-25688"/>
<dbReference type="SMR" id="O60462"/>
<dbReference type="BioGRID" id="114355">
    <property type="interactions" value="52"/>
</dbReference>
<dbReference type="CORUM" id="O60462"/>
<dbReference type="DIP" id="DIP-5745N"/>
<dbReference type="FunCoup" id="O60462">
    <property type="interactions" value="613"/>
</dbReference>
<dbReference type="IntAct" id="O60462">
    <property type="interactions" value="37"/>
</dbReference>
<dbReference type="STRING" id="9606.ENSP00000353582"/>
<dbReference type="BindingDB" id="O60462"/>
<dbReference type="ChEMBL" id="CHEMBL4295667"/>
<dbReference type="DrugBank" id="DB16453">
    <property type="generic name" value="Efzofitimod"/>
</dbReference>
<dbReference type="TCDB" id="8.A.47.1.6">
    <property type="family name" value="the neuropilin and tolloid-like (neto) family"/>
</dbReference>
<dbReference type="GlyCosmos" id="O60462">
    <property type="glycosylation" value="4 sites, No reported glycans"/>
</dbReference>
<dbReference type="GlyGen" id="O60462">
    <property type="glycosylation" value="12 sites, 1 N-linked glycan (2 sites), 2 O-linked glycans (8 sites)"/>
</dbReference>
<dbReference type="iPTMnet" id="O60462"/>
<dbReference type="PhosphoSitePlus" id="O60462"/>
<dbReference type="SwissPalm" id="O60462"/>
<dbReference type="BioMuta" id="NRP2"/>
<dbReference type="jPOST" id="O60462"/>
<dbReference type="MassIVE" id="O60462"/>
<dbReference type="PaxDb" id="9606-ENSP00000353582"/>
<dbReference type="PeptideAtlas" id="O60462"/>
<dbReference type="ProteomicsDB" id="20039"/>
<dbReference type="ProteomicsDB" id="49409">
    <molecule id="O60462-1"/>
</dbReference>
<dbReference type="ProteomicsDB" id="49410">
    <molecule id="O60462-2"/>
</dbReference>
<dbReference type="ProteomicsDB" id="49411">
    <molecule id="O60462-3"/>
</dbReference>
<dbReference type="ProteomicsDB" id="49412">
    <molecule id="O60462-4"/>
</dbReference>
<dbReference type="ProteomicsDB" id="49413">
    <molecule id="O60462-5"/>
</dbReference>
<dbReference type="ABCD" id="O60462">
    <property type="antibodies" value="8 sequenced antibodies"/>
</dbReference>
<dbReference type="Antibodypedia" id="34173">
    <property type="antibodies" value="451 antibodies from 35 providers"/>
</dbReference>
<dbReference type="DNASU" id="8828"/>
<dbReference type="Ensembl" id="ENST00000272849.7">
    <molecule id="O60462-5"/>
    <property type="protein sequence ID" value="ENSP00000272849.3"/>
    <property type="gene ID" value="ENSG00000118257.17"/>
</dbReference>
<dbReference type="Ensembl" id="ENST00000357118.8">
    <molecule id="O60462-4"/>
    <property type="protein sequence ID" value="ENSP00000349632.4"/>
    <property type="gene ID" value="ENSG00000118257.17"/>
</dbReference>
<dbReference type="Ensembl" id="ENST00000357785.10">
    <molecule id="O60462-3"/>
    <property type="protein sequence ID" value="ENSP00000350432.5"/>
    <property type="gene ID" value="ENSG00000118257.17"/>
</dbReference>
<dbReference type="Ensembl" id="ENST00000360409.7">
    <molecule id="O60462-1"/>
    <property type="protein sequence ID" value="ENSP00000353582.3"/>
    <property type="gene ID" value="ENSG00000118257.17"/>
</dbReference>
<dbReference type="Ensembl" id="ENST00000412873.2">
    <molecule id="O60462-2"/>
    <property type="protein sequence ID" value="ENSP00000407626.2"/>
    <property type="gene ID" value="ENSG00000118257.17"/>
</dbReference>
<dbReference type="Ensembl" id="ENST00000417189.5">
    <molecule id="O60462-6"/>
    <property type="protein sequence ID" value="ENSP00000387519.1"/>
    <property type="gene ID" value="ENSG00000118257.17"/>
</dbReference>
<dbReference type="GeneID" id="8828"/>
<dbReference type="KEGG" id="hsa:8828"/>
<dbReference type="MANE-Select" id="ENST00000357785.10">
    <molecule id="O60462-3"/>
    <property type="protein sequence ID" value="ENSP00000350432.5"/>
    <property type="RefSeq nucleotide sequence ID" value="NM_003872.3"/>
    <property type="RefSeq protein sequence ID" value="NP_003863.2"/>
</dbReference>
<dbReference type="UCSC" id="uc002vau.4">
    <molecule id="O60462-1"/>
    <property type="organism name" value="human"/>
</dbReference>
<dbReference type="UCSC" id="uc002vav.4">
    <property type="organism name" value="human"/>
</dbReference>
<dbReference type="UCSC" id="uc002vaw.3">
    <property type="organism name" value="human"/>
</dbReference>
<dbReference type="UCSC" id="uc002vax.4">
    <property type="organism name" value="human"/>
</dbReference>
<dbReference type="UCSC" id="uc002vay.4">
    <property type="organism name" value="human"/>
</dbReference>
<dbReference type="AGR" id="HGNC:8005"/>
<dbReference type="CTD" id="8828"/>
<dbReference type="DisGeNET" id="8828"/>
<dbReference type="GeneCards" id="NRP2"/>
<dbReference type="HGNC" id="HGNC:8005">
    <property type="gene designation" value="NRP2"/>
</dbReference>
<dbReference type="HPA" id="ENSG00000118257">
    <property type="expression patterns" value="Tissue enhanced (intestine)"/>
</dbReference>
<dbReference type="MIM" id="602070">
    <property type="type" value="gene"/>
</dbReference>
<dbReference type="neXtProt" id="NX_O60462"/>
<dbReference type="OpenTargets" id="ENSG00000118257"/>
<dbReference type="PharmGKB" id="PA31784"/>
<dbReference type="VEuPathDB" id="HostDB:ENSG00000118257"/>
<dbReference type="eggNOG" id="ENOG502QVB7">
    <property type="taxonomic scope" value="Eukaryota"/>
</dbReference>
<dbReference type="GeneTree" id="ENSGT00940000155270"/>
<dbReference type="HOGENOM" id="CLU_015228_6_1_1"/>
<dbReference type="InParanoid" id="O60462"/>
<dbReference type="OMA" id="XYDFIEI"/>
<dbReference type="OrthoDB" id="6155811at2759"/>
<dbReference type="PAN-GO" id="O60462">
    <property type="GO annotations" value="5 GO annotations based on evolutionary models"/>
</dbReference>
<dbReference type="PhylomeDB" id="O60462"/>
<dbReference type="TreeFam" id="TF316506"/>
<dbReference type="PathwayCommons" id="O60462"/>
<dbReference type="Reactome" id="R-HSA-194306">
    <property type="pathway name" value="Neurophilin interactions with VEGF and VEGFR"/>
</dbReference>
<dbReference type="Reactome" id="R-HSA-447038">
    <property type="pathway name" value="NrCAM interactions"/>
</dbReference>
<dbReference type="SignaLink" id="O60462"/>
<dbReference type="SIGNOR" id="O60462"/>
<dbReference type="BioGRID-ORCS" id="8828">
    <property type="hits" value="12 hits in 1144 CRISPR screens"/>
</dbReference>
<dbReference type="ChiTaRS" id="NRP2">
    <property type="organism name" value="human"/>
</dbReference>
<dbReference type="EvolutionaryTrace" id="O60462"/>
<dbReference type="GeneWiki" id="NRP2"/>
<dbReference type="GenomeRNAi" id="8828"/>
<dbReference type="Pharos" id="O60462">
    <property type="development level" value="Tbio"/>
</dbReference>
<dbReference type="PRO" id="PR:O60462"/>
<dbReference type="Proteomes" id="UP000005640">
    <property type="component" value="Chromosome 2"/>
</dbReference>
<dbReference type="RNAct" id="O60462">
    <property type="molecule type" value="protein"/>
</dbReference>
<dbReference type="Bgee" id="ENSG00000118257">
    <property type="expression patterns" value="Expressed in sural nerve and 161 other cell types or tissues"/>
</dbReference>
<dbReference type="ExpressionAtlas" id="O60462">
    <property type="expression patterns" value="baseline and differential"/>
</dbReference>
<dbReference type="GO" id="GO:0030424">
    <property type="term" value="C:axon"/>
    <property type="evidence" value="ECO:0000318"/>
    <property type="project" value="GO_Central"/>
</dbReference>
<dbReference type="GO" id="GO:0005576">
    <property type="term" value="C:extracellular region"/>
    <property type="evidence" value="ECO:0007669"/>
    <property type="project" value="UniProtKB-SubCell"/>
</dbReference>
<dbReference type="GO" id="GO:0098978">
    <property type="term" value="C:glutamatergic synapse"/>
    <property type="evidence" value="ECO:0000318"/>
    <property type="project" value="GO_Central"/>
</dbReference>
<dbReference type="GO" id="GO:0016020">
    <property type="term" value="C:membrane"/>
    <property type="evidence" value="ECO:0000304"/>
    <property type="project" value="ProtInc"/>
</dbReference>
<dbReference type="GO" id="GO:0005886">
    <property type="term" value="C:plasma membrane"/>
    <property type="evidence" value="ECO:0000318"/>
    <property type="project" value="GO_Central"/>
</dbReference>
<dbReference type="GO" id="GO:0045211">
    <property type="term" value="C:postsynaptic membrane"/>
    <property type="evidence" value="ECO:0000318"/>
    <property type="project" value="GO_Central"/>
</dbReference>
<dbReference type="GO" id="GO:0002116">
    <property type="term" value="C:semaphorin receptor complex"/>
    <property type="evidence" value="ECO:0000303"/>
    <property type="project" value="BHF-UCL"/>
</dbReference>
<dbReference type="GO" id="GO:0019955">
    <property type="term" value="F:cytokine binding"/>
    <property type="evidence" value="ECO:0000303"/>
    <property type="project" value="BHF-UCL"/>
</dbReference>
<dbReference type="GO" id="GO:0019838">
    <property type="term" value="F:growth factor binding"/>
    <property type="evidence" value="ECO:0000304"/>
    <property type="project" value="BHF-UCL"/>
</dbReference>
<dbReference type="GO" id="GO:0008201">
    <property type="term" value="F:heparin binding"/>
    <property type="evidence" value="ECO:0007669"/>
    <property type="project" value="UniProtKB-KW"/>
</dbReference>
<dbReference type="GO" id="GO:0042802">
    <property type="term" value="F:identical protein binding"/>
    <property type="evidence" value="ECO:0000353"/>
    <property type="project" value="IntAct"/>
</dbReference>
<dbReference type="GO" id="GO:0046872">
    <property type="term" value="F:metal ion binding"/>
    <property type="evidence" value="ECO:0007669"/>
    <property type="project" value="UniProtKB-KW"/>
</dbReference>
<dbReference type="GO" id="GO:0017154">
    <property type="term" value="F:semaphorin receptor activity"/>
    <property type="evidence" value="ECO:0000318"/>
    <property type="project" value="GO_Central"/>
</dbReference>
<dbReference type="GO" id="GO:0038023">
    <property type="term" value="F:signaling receptor activity"/>
    <property type="evidence" value="ECO:0000304"/>
    <property type="project" value="ProtInc"/>
</dbReference>
<dbReference type="GO" id="GO:0005021">
    <property type="term" value="F:vascular endothelial growth factor receptor activity"/>
    <property type="evidence" value="ECO:0000304"/>
    <property type="project" value="ProtInc"/>
</dbReference>
<dbReference type="GO" id="GO:0001525">
    <property type="term" value="P:angiogenesis"/>
    <property type="evidence" value="ECO:0000303"/>
    <property type="project" value="UniProtKB"/>
</dbReference>
<dbReference type="GO" id="GO:0048846">
    <property type="term" value="P:axon extension involved in axon guidance"/>
    <property type="evidence" value="ECO:0000250"/>
    <property type="project" value="BHF-UCL"/>
</dbReference>
<dbReference type="GO" id="GO:0007411">
    <property type="term" value="P:axon guidance"/>
    <property type="evidence" value="ECO:0000318"/>
    <property type="project" value="GO_Central"/>
</dbReference>
<dbReference type="GO" id="GO:0021785">
    <property type="term" value="P:branchiomotor neuron axon guidance"/>
    <property type="evidence" value="ECO:0000250"/>
    <property type="project" value="ParkinsonsUK-UCL"/>
</dbReference>
<dbReference type="GO" id="GO:0007155">
    <property type="term" value="P:cell adhesion"/>
    <property type="evidence" value="ECO:0000303"/>
    <property type="project" value="UniProtKB"/>
</dbReference>
<dbReference type="GO" id="GO:1990830">
    <property type="term" value="P:cellular response to leukemia inhibitory factor"/>
    <property type="evidence" value="ECO:0007669"/>
    <property type="project" value="Ensembl"/>
</dbReference>
<dbReference type="GO" id="GO:1904835">
    <property type="term" value="P:dorsal root ganglion morphogenesis"/>
    <property type="evidence" value="ECO:0007669"/>
    <property type="project" value="Ensembl"/>
</dbReference>
<dbReference type="GO" id="GO:0021612">
    <property type="term" value="P:facial nerve structural organization"/>
    <property type="evidence" value="ECO:0000250"/>
    <property type="project" value="ParkinsonsUK-UCL"/>
</dbReference>
<dbReference type="GO" id="GO:1903375">
    <property type="term" value="P:facioacoustic ganglion development"/>
    <property type="evidence" value="ECO:0007669"/>
    <property type="project" value="Ensembl"/>
</dbReference>
<dbReference type="GO" id="GO:0021828">
    <property type="term" value="P:gonadotrophin-releasing hormone neuronal migration to the hypothalamus"/>
    <property type="evidence" value="ECO:0007669"/>
    <property type="project" value="Ensembl"/>
</dbReference>
<dbReference type="GO" id="GO:0050919">
    <property type="term" value="P:negative chemotaxis"/>
    <property type="evidence" value="ECO:0007669"/>
    <property type="project" value="Ensembl"/>
</dbReference>
<dbReference type="GO" id="GO:0021675">
    <property type="term" value="P:nerve development"/>
    <property type="evidence" value="ECO:0000250"/>
    <property type="project" value="BHF-UCL"/>
</dbReference>
<dbReference type="GO" id="GO:1901166">
    <property type="term" value="P:neural crest cell migration involved in autonomic nervous system development"/>
    <property type="evidence" value="ECO:0007669"/>
    <property type="project" value="Ensembl"/>
</dbReference>
<dbReference type="GO" id="GO:0003148">
    <property type="term" value="P:outflow tract septum morphogenesis"/>
    <property type="evidence" value="ECO:0000250"/>
    <property type="project" value="BHF-UCL"/>
</dbReference>
<dbReference type="GO" id="GO:0010595">
    <property type="term" value="P:positive regulation of endothelial cell migration"/>
    <property type="evidence" value="ECO:0000304"/>
    <property type="project" value="BHF-UCL"/>
</dbReference>
<dbReference type="GO" id="GO:0001938">
    <property type="term" value="P:positive regulation of endothelial cell proliferation"/>
    <property type="evidence" value="ECO:0000304"/>
    <property type="project" value="BHF-UCL"/>
</dbReference>
<dbReference type="GO" id="GO:0099175">
    <property type="term" value="P:regulation of postsynapse organization"/>
    <property type="evidence" value="ECO:0007669"/>
    <property type="project" value="Ensembl"/>
</dbReference>
<dbReference type="GO" id="GO:0071526">
    <property type="term" value="P:semaphorin-plexin signaling pathway"/>
    <property type="evidence" value="ECO:0000250"/>
    <property type="project" value="BHF-UCL"/>
</dbReference>
<dbReference type="GO" id="GO:0097374">
    <property type="term" value="P:sensory neuron axon guidance"/>
    <property type="evidence" value="ECO:0007669"/>
    <property type="project" value="Ensembl"/>
</dbReference>
<dbReference type="GO" id="GO:0061549">
    <property type="term" value="P:sympathetic ganglion development"/>
    <property type="evidence" value="ECO:0000250"/>
    <property type="project" value="BHF-UCL"/>
</dbReference>
<dbReference type="GO" id="GO:0097490">
    <property type="term" value="P:sympathetic neuron projection extension"/>
    <property type="evidence" value="ECO:0000250"/>
    <property type="project" value="BHF-UCL"/>
</dbReference>
<dbReference type="GO" id="GO:0097491">
    <property type="term" value="P:sympathetic neuron projection guidance"/>
    <property type="evidence" value="ECO:0000250"/>
    <property type="project" value="BHF-UCL"/>
</dbReference>
<dbReference type="GO" id="GO:0061551">
    <property type="term" value="P:trigeminal ganglion development"/>
    <property type="evidence" value="ECO:0007669"/>
    <property type="project" value="Ensembl"/>
</dbReference>
<dbReference type="GO" id="GO:0021637">
    <property type="term" value="P:trigeminal nerve structural organization"/>
    <property type="evidence" value="ECO:0000250"/>
    <property type="project" value="ParkinsonsUK-UCL"/>
</dbReference>
<dbReference type="GO" id="GO:0036486">
    <property type="term" value="P:ventral trunk neural crest cell migration"/>
    <property type="evidence" value="ECO:0007669"/>
    <property type="project" value="Ensembl"/>
</dbReference>
<dbReference type="GO" id="GO:0021649">
    <property type="term" value="P:vestibulocochlear nerve structural organization"/>
    <property type="evidence" value="ECO:0007669"/>
    <property type="project" value="Ensembl"/>
</dbReference>
<dbReference type="CDD" id="cd00041">
    <property type="entry name" value="CUB"/>
    <property type="match status" value="2"/>
</dbReference>
<dbReference type="CDD" id="cd00057">
    <property type="entry name" value="FA58C"/>
    <property type="match status" value="2"/>
</dbReference>
<dbReference type="CDD" id="cd06263">
    <property type="entry name" value="MAM"/>
    <property type="match status" value="1"/>
</dbReference>
<dbReference type="FunFam" id="2.60.120.260:FF:000002">
    <property type="entry name" value="Coagulation factor VIII"/>
    <property type="match status" value="1"/>
</dbReference>
<dbReference type="FunFam" id="2.60.120.200:FF:000042">
    <property type="entry name" value="Neuropilin"/>
    <property type="match status" value="1"/>
</dbReference>
<dbReference type="FunFam" id="2.60.120.260:FF:000013">
    <property type="entry name" value="Neuropilin"/>
    <property type="match status" value="1"/>
</dbReference>
<dbReference type="FunFam" id="2.60.120.290:FF:000003">
    <property type="entry name" value="Neuropilin"/>
    <property type="match status" value="1"/>
</dbReference>
<dbReference type="FunFam" id="2.60.120.290:FF:000010">
    <property type="entry name" value="Neuropilin"/>
    <property type="match status" value="1"/>
</dbReference>
<dbReference type="Gene3D" id="2.60.120.200">
    <property type="match status" value="1"/>
</dbReference>
<dbReference type="Gene3D" id="2.60.120.260">
    <property type="entry name" value="Galactose-binding domain-like"/>
    <property type="match status" value="2"/>
</dbReference>
<dbReference type="Gene3D" id="2.60.120.290">
    <property type="entry name" value="Spermadhesin, CUB domain"/>
    <property type="match status" value="2"/>
</dbReference>
<dbReference type="InterPro" id="IPR013320">
    <property type="entry name" value="ConA-like_dom_sf"/>
</dbReference>
<dbReference type="InterPro" id="IPR000859">
    <property type="entry name" value="CUB_dom"/>
</dbReference>
<dbReference type="InterPro" id="IPR000421">
    <property type="entry name" value="FA58C"/>
</dbReference>
<dbReference type="InterPro" id="IPR008979">
    <property type="entry name" value="Galactose-bd-like_sf"/>
</dbReference>
<dbReference type="InterPro" id="IPR000998">
    <property type="entry name" value="MAM_dom"/>
</dbReference>
<dbReference type="InterPro" id="IPR014648">
    <property type="entry name" value="Neuropilin"/>
</dbReference>
<dbReference type="InterPro" id="IPR022579">
    <property type="entry name" value="Neuropilin_C"/>
</dbReference>
<dbReference type="InterPro" id="IPR050633">
    <property type="entry name" value="Neuropilin_MCO_CoagFactor"/>
</dbReference>
<dbReference type="InterPro" id="IPR035914">
    <property type="entry name" value="Sperma_CUB_dom_sf"/>
</dbReference>
<dbReference type="PANTHER" id="PTHR46806">
    <property type="entry name" value="F5/8 TYPE C DOMAIN-CONTAINING PROTEIN"/>
    <property type="match status" value="1"/>
</dbReference>
<dbReference type="PANTHER" id="PTHR46806:SF2">
    <property type="entry name" value="NEUROPILIN-2"/>
    <property type="match status" value="1"/>
</dbReference>
<dbReference type="Pfam" id="PF00431">
    <property type="entry name" value="CUB"/>
    <property type="match status" value="2"/>
</dbReference>
<dbReference type="Pfam" id="PF11980">
    <property type="entry name" value="DUF3481"/>
    <property type="match status" value="1"/>
</dbReference>
<dbReference type="Pfam" id="PF00754">
    <property type="entry name" value="F5_F8_type_C"/>
    <property type="match status" value="2"/>
</dbReference>
<dbReference type="Pfam" id="PF00629">
    <property type="entry name" value="MAM"/>
    <property type="match status" value="1"/>
</dbReference>
<dbReference type="PIRSF" id="PIRSF036960">
    <property type="entry name" value="Neuropilin"/>
    <property type="match status" value="1"/>
</dbReference>
<dbReference type="PRINTS" id="PR00020">
    <property type="entry name" value="MAMDOMAIN"/>
</dbReference>
<dbReference type="SMART" id="SM00042">
    <property type="entry name" value="CUB"/>
    <property type="match status" value="2"/>
</dbReference>
<dbReference type="SMART" id="SM00231">
    <property type="entry name" value="FA58C"/>
    <property type="match status" value="2"/>
</dbReference>
<dbReference type="SMART" id="SM00137">
    <property type="entry name" value="MAM"/>
    <property type="match status" value="1"/>
</dbReference>
<dbReference type="SUPFAM" id="SSF49899">
    <property type="entry name" value="Concanavalin A-like lectins/glucanases"/>
    <property type="match status" value="1"/>
</dbReference>
<dbReference type="SUPFAM" id="SSF49785">
    <property type="entry name" value="Galactose-binding domain-like"/>
    <property type="match status" value="2"/>
</dbReference>
<dbReference type="SUPFAM" id="SSF49854">
    <property type="entry name" value="Spermadhesin, CUB domain"/>
    <property type="match status" value="2"/>
</dbReference>
<dbReference type="PROSITE" id="PS01180">
    <property type="entry name" value="CUB"/>
    <property type="match status" value="2"/>
</dbReference>
<dbReference type="PROSITE" id="PS01285">
    <property type="entry name" value="FA58C_1"/>
    <property type="match status" value="2"/>
</dbReference>
<dbReference type="PROSITE" id="PS01286">
    <property type="entry name" value="FA58C_2"/>
    <property type="match status" value="2"/>
</dbReference>
<dbReference type="PROSITE" id="PS50022">
    <property type="entry name" value="FA58C_3"/>
    <property type="match status" value="2"/>
</dbReference>
<dbReference type="PROSITE" id="PS50060">
    <property type="entry name" value="MAM_2"/>
    <property type="match status" value="1"/>
</dbReference>
<accession>O60462</accession>
<accession>A0A024R3W6</accession>
<accession>A0A024R412</accession>
<accession>E9PF66</accession>
<accession>O14820</accession>
<accession>O14821</accession>
<accession>Q53TQ4</accession>
<accession>Q53TS3</accession>
<accession>Q7LBX6</accession>
<accession>Q7LBX7</accession>
<accession>Q9H2D4</accession>
<accession>Q9H2D5</accession>
<accession>Q9H2E2</accession>
<accession>Q9H2E3</accession>
<accession>Q9H2E4</accession>
<accession>X5D2Q8</accession>
<name>NRP2_HUMAN</name>
<keyword id="KW-0002">3D-structure</keyword>
<keyword id="KW-0025">Alternative splicing</keyword>
<keyword id="KW-0106">Calcium</keyword>
<keyword id="KW-0217">Developmental protein</keyword>
<keyword id="KW-0221">Differentiation</keyword>
<keyword id="KW-1015">Disulfide bond</keyword>
<keyword id="KW-0325">Glycoprotein</keyword>
<keyword id="KW-0358">Heparin-binding</keyword>
<keyword id="KW-0945">Host-virus interaction</keyword>
<keyword id="KW-0472">Membrane</keyword>
<keyword id="KW-0479">Metal-binding</keyword>
<keyword id="KW-0524">Neurogenesis</keyword>
<keyword id="KW-1267">Proteomics identification</keyword>
<keyword id="KW-0675">Receptor</keyword>
<keyword id="KW-1185">Reference proteome</keyword>
<keyword id="KW-0677">Repeat</keyword>
<keyword id="KW-0964">Secreted</keyword>
<keyword id="KW-0732">Signal</keyword>
<keyword id="KW-0812">Transmembrane</keyword>
<keyword id="KW-1133">Transmembrane helix</keyword>